<sequence>MAESKGSTSKEGFGDWCILEAECSDVENDLEKLFDEDTDSDISDLLDDNDLEQGNSRELFHQQECQESEEHLQKLKRKYLSPKAVAQLSPRFESISLSPQQKSKRRLFAEQDSGLELTLTNEAEDVSSEVEVPALDSQPVAGEQSGDIDIHFTALLRANNNRAILMAKFKEAFGVGFYDLTRQFKSYKTCCNAWVISVYAVHDDLLESSKQLLQQHCDYVWIRQTAAMSLFLLCFKVGKNRGTVHKLMMSMLNVHEKQILSEPPKLRNTAAALFWYKGCMGSGGFTYGPYPDWIAQQTILGHQNAEASSFDLSEMIQWAFDNNHMDESDIAYQYAKLAPENSNAVAWLAHNNQARFVRECAAMVRFYKKGQMKEMSMSEWIYARIHEVDGEGHWSTIAKFLRYQQVNFIMFLAALKDLLHAVPKRNCILIYGPPNTGKSAFTMSLIRVLKGRVISFVNSKSQFWLQPLSECKIALLDDVTDPCWIYMDTYLRNGLDGHVVSLDCKHKAPIQTKFPALLLTSNINVHNEVNYRYLHSRIQGFEFPNPFPMKADNTPQFELTDQSWKSFFTRLWQQLELSDHEEEGENGESQRTFQCSTRSANEHL</sequence>
<evidence type="ECO:0000255" key="1">
    <source>
        <dbReference type="HAMAP-Rule" id="MF_04000"/>
    </source>
</evidence>
<evidence type="ECO:0000256" key="2">
    <source>
        <dbReference type="SAM" id="MobiDB-lite"/>
    </source>
</evidence>
<feature type="chain" id="PRO_0000133117" description="Replication protein E1">
    <location>
        <begin position="1"/>
        <end position="604"/>
    </location>
</feature>
<feature type="domain" description="SF3 helicase" evidence="1">
    <location>
        <begin position="406"/>
        <end position="556"/>
    </location>
</feature>
<feature type="region of interest" description="DNA-binding region" evidence="1">
    <location>
        <begin position="144"/>
        <end position="307"/>
    </location>
</feature>
<feature type="region of interest" description="Disordered" evidence="2">
    <location>
        <begin position="579"/>
        <end position="604"/>
    </location>
</feature>
<feature type="short sequence motif" description="Nuclear localization signal" evidence="1">
    <location>
        <begin position="76"/>
        <end position="78"/>
    </location>
</feature>
<feature type="compositionally biased region" description="Polar residues" evidence="2">
    <location>
        <begin position="587"/>
        <end position="604"/>
    </location>
</feature>
<feature type="binding site" evidence="1">
    <location>
        <begin position="432"/>
        <end position="439"/>
    </location>
    <ligand>
        <name>ATP</name>
        <dbReference type="ChEBI" id="CHEBI:30616"/>
    </ligand>
</feature>
<feature type="modified residue" description="Phosphoserine; by host" evidence="1">
    <location>
        <position position="81"/>
    </location>
</feature>
<feature type="modified residue" description="Phosphoserine; by host" evidence="1">
    <location>
        <position position="89"/>
    </location>
</feature>
<feature type="cross-link" description="Glycyl lysine isopeptide (Lys-Gly) (interchain with G-Cter in SUMO)" evidence="1">
    <location>
        <position position="513"/>
    </location>
</feature>
<organismHost>
    <name type="scientific">Homo sapiens</name>
    <name type="common">Human</name>
    <dbReference type="NCBI Taxonomy" id="9606"/>
</organismHost>
<comment type="function">
    <text evidence="1">ATP-dependent DNA 3'-5' helicase required for initiation of viral DNA replication. It forms a complex with the viral E2 protein. The E1-E2 complex binds to the replication origin which contains binding sites for both proteins. During the initial step, a dimer of E1 interacts with a dimer of protein E2 leading to a complex that binds the viral origin of replication with high specificity. Then, a second dimer of E1 displaces the E2 dimer in an ATP-dependent manner to form the E1 tetramer. Following this, two E1 monomers are added to each half of the site, which results in the formation of two E1 trimers on the viral ori. Subsequently, two hexamers will be created. The double hexamer acts as a bi-directional helicase machinery and unwinds the viral DNA and then recruits the host DNA polymerase to start replication.</text>
</comment>
<comment type="catalytic activity">
    <reaction evidence="1">
        <text>Couples ATP hydrolysis with the unwinding of duplex DNA by translocating in the 3'-5' direction.</text>
        <dbReference type="EC" id="5.6.2.4"/>
    </reaction>
</comment>
<comment type="catalytic activity">
    <reaction evidence="1">
        <text>ATP + H2O = ADP + phosphate + H(+)</text>
        <dbReference type="Rhea" id="RHEA:13065"/>
        <dbReference type="ChEBI" id="CHEBI:15377"/>
        <dbReference type="ChEBI" id="CHEBI:15378"/>
        <dbReference type="ChEBI" id="CHEBI:30616"/>
        <dbReference type="ChEBI" id="CHEBI:43474"/>
        <dbReference type="ChEBI" id="CHEBI:456216"/>
        <dbReference type="EC" id="5.6.2.4"/>
    </reaction>
</comment>
<comment type="subunit">
    <text evidence="1">Can form hexamers. Interacts with E2 protein; this interaction increases E1 DNA binding specificity. Interacts with host DNA polymerase subunit POLA2. Interacts with host single stranded DNA-binding protein RPA1. Interacts with host TOP1; this interaction stimulates the enzymatic activity of TOP1.</text>
</comment>
<comment type="subcellular location">
    <subcellularLocation>
        <location evidence="1">Host nucleus</location>
    </subcellularLocation>
</comment>
<comment type="PTM">
    <text evidence="1">Phosphorylated.</text>
</comment>
<comment type="PTM">
    <text evidence="1">Sumoylated.</text>
</comment>
<comment type="similarity">
    <text evidence="1">Belongs to the papillomaviridae E1 protein family.</text>
</comment>
<proteinExistence type="inferred from homology"/>
<name>VE1_HPV19</name>
<accession>Q02048</accession>
<gene>
    <name evidence="1" type="primary">E1</name>
</gene>
<organism>
    <name type="scientific">Human papillomavirus 19</name>
    <dbReference type="NCBI Taxonomy" id="10608"/>
    <lineage>
        <taxon>Viruses</taxon>
        <taxon>Monodnaviria</taxon>
        <taxon>Shotokuvirae</taxon>
        <taxon>Cossaviricota</taxon>
        <taxon>Papovaviricetes</taxon>
        <taxon>Zurhausenvirales</taxon>
        <taxon>Papillomaviridae</taxon>
        <taxon>Firstpapillomavirinae</taxon>
        <taxon>Betapapillomavirus</taxon>
        <taxon>Betapapillomavirus 1</taxon>
    </lineage>
</organism>
<reference key="1">
    <citation type="journal article" date="1994" name="Curr. Top. Microbiol. Immunol.">
        <title>Primer-directed sequencing of human papillomavirus types.</title>
        <authorList>
            <person name="Delius H."/>
            <person name="Hofmann B."/>
        </authorList>
    </citation>
    <scope>NUCLEOTIDE SEQUENCE [GENOMIC DNA]</scope>
</reference>
<reference key="2">
    <citation type="journal article" date="1992" name="J. Virol.">
        <title>Phylogenetic analysis of 48 papillomavirus types and 28 subtypes and variants: a showcase for the molecular evolution of DNA viruses.</title>
        <authorList>
            <person name="Chan S.-Y."/>
            <person name="Bernard H.U."/>
            <person name="Ong C.K."/>
            <person name="Chan S.P."/>
            <person name="Birgit H."/>
            <person name="Delius H."/>
        </authorList>
    </citation>
    <scope>NUCLEOTIDE SEQUENCE [GENOMIC DNA] OF 331-382</scope>
</reference>
<dbReference type="EC" id="5.6.2.4" evidence="1"/>
<dbReference type="EMBL" id="X74470">
    <property type="protein sequence ID" value="CAA52520.1"/>
    <property type="molecule type" value="Genomic_DNA"/>
</dbReference>
<dbReference type="EMBL" id="M96320">
    <property type="protein sequence ID" value="AAA47009.1"/>
    <property type="molecule type" value="Genomic_DNA"/>
</dbReference>
<dbReference type="PIR" id="S36487">
    <property type="entry name" value="S36487"/>
</dbReference>
<dbReference type="SMR" id="Q02048"/>
<dbReference type="Proteomes" id="UP000009110">
    <property type="component" value="Genome"/>
</dbReference>
<dbReference type="GO" id="GO:0042025">
    <property type="term" value="C:host cell nucleus"/>
    <property type="evidence" value="ECO:0007669"/>
    <property type="project" value="UniProtKB-SubCell"/>
</dbReference>
<dbReference type="GO" id="GO:0005524">
    <property type="term" value="F:ATP binding"/>
    <property type="evidence" value="ECO:0007669"/>
    <property type="project" value="UniProtKB-UniRule"/>
</dbReference>
<dbReference type="GO" id="GO:0016887">
    <property type="term" value="F:ATP hydrolysis activity"/>
    <property type="evidence" value="ECO:0007669"/>
    <property type="project" value="RHEA"/>
</dbReference>
<dbReference type="GO" id="GO:0003677">
    <property type="term" value="F:DNA binding"/>
    <property type="evidence" value="ECO:0007669"/>
    <property type="project" value="UniProtKB-UniRule"/>
</dbReference>
<dbReference type="GO" id="GO:0003678">
    <property type="term" value="F:DNA helicase activity"/>
    <property type="evidence" value="ECO:0007669"/>
    <property type="project" value="UniProtKB-UniRule"/>
</dbReference>
<dbReference type="GO" id="GO:0006260">
    <property type="term" value="P:DNA replication"/>
    <property type="evidence" value="ECO:0007669"/>
    <property type="project" value="UniProtKB-UniRule"/>
</dbReference>
<dbReference type="Gene3D" id="3.40.1310.10">
    <property type="match status" value="1"/>
</dbReference>
<dbReference type="Gene3D" id="3.40.50.300">
    <property type="entry name" value="P-loop containing nucleotide triphosphate hydrolases"/>
    <property type="match status" value="1"/>
</dbReference>
<dbReference type="Gene3D" id="1.10.10.510">
    <property type="entry name" value="Zinc finger, large T-antigen D1 domain"/>
    <property type="match status" value="1"/>
</dbReference>
<dbReference type="HAMAP" id="MF_04000">
    <property type="entry name" value="PPV_E1"/>
    <property type="match status" value="1"/>
</dbReference>
<dbReference type="InterPro" id="IPR014015">
    <property type="entry name" value="Helicase_SF3_DNA-vir"/>
</dbReference>
<dbReference type="InterPro" id="IPR027417">
    <property type="entry name" value="P-loop_NTPase"/>
</dbReference>
<dbReference type="InterPro" id="IPR001177">
    <property type="entry name" value="PPV_DNA_helicase_E1_C"/>
</dbReference>
<dbReference type="InterPro" id="IPR014000">
    <property type="entry name" value="PPV_DNA_helicase_E1_N"/>
</dbReference>
<dbReference type="InterPro" id="IPR046832">
    <property type="entry name" value="PPV_E1_DBD"/>
</dbReference>
<dbReference type="InterPro" id="IPR046935">
    <property type="entry name" value="PPV_E1_DBD_sf"/>
</dbReference>
<dbReference type="InterPro" id="IPR016393">
    <property type="entry name" value="Rep_E1_papillomaV"/>
</dbReference>
<dbReference type="InterPro" id="IPR037102">
    <property type="entry name" value="Znf_lg_T-Ag_D1_dom_sf"/>
</dbReference>
<dbReference type="Pfam" id="PF00519">
    <property type="entry name" value="PPV_E1_C"/>
    <property type="match status" value="1"/>
</dbReference>
<dbReference type="Pfam" id="PF20450">
    <property type="entry name" value="PPV_E1_DBD"/>
    <property type="match status" value="1"/>
</dbReference>
<dbReference type="Pfam" id="PF00524">
    <property type="entry name" value="PPV_E1_N"/>
    <property type="match status" value="1"/>
</dbReference>
<dbReference type="PIRSF" id="PIRSF003383">
    <property type="entry name" value="Rep_E1_papillomaV"/>
    <property type="match status" value="1"/>
</dbReference>
<dbReference type="SUPFAM" id="SSF55464">
    <property type="entry name" value="Origin of replication-binding domain, RBD-like"/>
    <property type="match status" value="1"/>
</dbReference>
<dbReference type="SUPFAM" id="SSF52540">
    <property type="entry name" value="P-loop containing nucleoside triphosphate hydrolases"/>
    <property type="match status" value="1"/>
</dbReference>
<dbReference type="PROSITE" id="PS51206">
    <property type="entry name" value="SF3_HELICASE_1"/>
    <property type="match status" value="1"/>
</dbReference>
<keyword id="KW-0067">ATP-binding</keyword>
<keyword id="KW-0235">DNA replication</keyword>
<keyword id="KW-0238">DNA-binding</keyword>
<keyword id="KW-0244">Early protein</keyword>
<keyword id="KW-0347">Helicase</keyword>
<keyword id="KW-1048">Host nucleus</keyword>
<keyword id="KW-0378">Hydrolase</keyword>
<keyword id="KW-0413">Isomerase</keyword>
<keyword id="KW-1017">Isopeptide bond</keyword>
<keyword id="KW-0547">Nucleotide-binding</keyword>
<keyword id="KW-0597">Phosphoprotein</keyword>
<keyword id="KW-0832">Ubl conjugation</keyword>
<protein>
    <recommendedName>
        <fullName evidence="1">Replication protein E1</fullName>
        <ecNumber evidence="1">5.6.2.4</ecNumber>
    </recommendedName>
    <alternativeName>
        <fullName evidence="1">ATP-dependent helicase E1</fullName>
    </alternativeName>
    <alternativeName>
        <fullName evidence="1">DNA 3'-5' helicase E1</fullName>
    </alternativeName>
</protein>